<protein>
    <recommendedName>
        <fullName evidence="1">Large ribosomal subunit protein uL18</fullName>
    </recommendedName>
    <alternativeName>
        <fullName evidence="2">50S ribosomal protein L18</fullName>
    </alternativeName>
</protein>
<comment type="function">
    <text evidence="1">This is one of the proteins that bind and probably mediate the attachment of the 5S RNA into the large ribosomal subunit, where it forms part of the central protuberance.</text>
</comment>
<comment type="subunit">
    <text evidence="1">Part of the 50S ribosomal subunit; part of the 5S rRNA/L5/L18/L25 subcomplex. Contacts the 5S and 23S rRNAs.</text>
</comment>
<comment type="similarity">
    <text evidence="1">Belongs to the universal ribosomal protein uL18 family.</text>
</comment>
<dbReference type="EMBL" id="BA000028">
    <property type="protein sequence ID" value="BAC12091.1"/>
    <property type="molecule type" value="Genomic_DNA"/>
</dbReference>
<dbReference type="RefSeq" id="WP_011064538.1">
    <property type="nucleotide sequence ID" value="NC_004193.1"/>
</dbReference>
<dbReference type="SMR" id="Q8ETW7"/>
<dbReference type="STRING" id="221109.gene:10732325"/>
<dbReference type="KEGG" id="oih:OB0135"/>
<dbReference type="eggNOG" id="COG0256">
    <property type="taxonomic scope" value="Bacteria"/>
</dbReference>
<dbReference type="HOGENOM" id="CLU_098841_0_1_9"/>
<dbReference type="OrthoDB" id="9810939at2"/>
<dbReference type="PhylomeDB" id="Q8ETW7"/>
<dbReference type="Proteomes" id="UP000000822">
    <property type="component" value="Chromosome"/>
</dbReference>
<dbReference type="GO" id="GO:0022625">
    <property type="term" value="C:cytosolic large ribosomal subunit"/>
    <property type="evidence" value="ECO:0007669"/>
    <property type="project" value="TreeGrafter"/>
</dbReference>
<dbReference type="GO" id="GO:0008097">
    <property type="term" value="F:5S rRNA binding"/>
    <property type="evidence" value="ECO:0007669"/>
    <property type="project" value="TreeGrafter"/>
</dbReference>
<dbReference type="GO" id="GO:0003735">
    <property type="term" value="F:structural constituent of ribosome"/>
    <property type="evidence" value="ECO:0007669"/>
    <property type="project" value="InterPro"/>
</dbReference>
<dbReference type="GO" id="GO:0006412">
    <property type="term" value="P:translation"/>
    <property type="evidence" value="ECO:0007669"/>
    <property type="project" value="UniProtKB-UniRule"/>
</dbReference>
<dbReference type="CDD" id="cd00432">
    <property type="entry name" value="Ribosomal_L18_L5e"/>
    <property type="match status" value="1"/>
</dbReference>
<dbReference type="FunFam" id="3.30.420.100:FF:000001">
    <property type="entry name" value="50S ribosomal protein L18"/>
    <property type="match status" value="1"/>
</dbReference>
<dbReference type="Gene3D" id="3.30.420.100">
    <property type="match status" value="1"/>
</dbReference>
<dbReference type="HAMAP" id="MF_01337_B">
    <property type="entry name" value="Ribosomal_uL18_B"/>
    <property type="match status" value="1"/>
</dbReference>
<dbReference type="InterPro" id="IPR004389">
    <property type="entry name" value="Ribosomal_uL18_bac-type"/>
</dbReference>
<dbReference type="InterPro" id="IPR005484">
    <property type="entry name" value="Ribosomal_uL18_bac/euk"/>
</dbReference>
<dbReference type="NCBIfam" id="TIGR00060">
    <property type="entry name" value="L18_bact"/>
    <property type="match status" value="1"/>
</dbReference>
<dbReference type="PANTHER" id="PTHR12899">
    <property type="entry name" value="39S RIBOSOMAL PROTEIN L18, MITOCHONDRIAL"/>
    <property type="match status" value="1"/>
</dbReference>
<dbReference type="PANTHER" id="PTHR12899:SF3">
    <property type="entry name" value="LARGE RIBOSOMAL SUBUNIT PROTEIN UL18M"/>
    <property type="match status" value="1"/>
</dbReference>
<dbReference type="Pfam" id="PF00861">
    <property type="entry name" value="Ribosomal_L18p"/>
    <property type="match status" value="1"/>
</dbReference>
<dbReference type="SUPFAM" id="SSF53137">
    <property type="entry name" value="Translational machinery components"/>
    <property type="match status" value="1"/>
</dbReference>
<keyword id="KW-1185">Reference proteome</keyword>
<keyword id="KW-0687">Ribonucleoprotein</keyword>
<keyword id="KW-0689">Ribosomal protein</keyword>
<keyword id="KW-0694">RNA-binding</keyword>
<keyword id="KW-0699">rRNA-binding</keyword>
<organism>
    <name type="scientific">Oceanobacillus iheyensis (strain DSM 14371 / CIP 107618 / JCM 11309 / KCTC 3954 / HTE831)</name>
    <dbReference type="NCBI Taxonomy" id="221109"/>
    <lineage>
        <taxon>Bacteria</taxon>
        <taxon>Bacillati</taxon>
        <taxon>Bacillota</taxon>
        <taxon>Bacilli</taxon>
        <taxon>Bacillales</taxon>
        <taxon>Bacillaceae</taxon>
        <taxon>Oceanobacillus</taxon>
    </lineage>
</organism>
<reference key="1">
    <citation type="journal article" date="2002" name="Nucleic Acids Res.">
        <title>Genome sequence of Oceanobacillus iheyensis isolated from the Iheya Ridge and its unexpected adaptive capabilities to extreme environments.</title>
        <authorList>
            <person name="Takami H."/>
            <person name="Takaki Y."/>
            <person name="Uchiyama I."/>
        </authorList>
    </citation>
    <scope>NUCLEOTIDE SEQUENCE [LARGE SCALE GENOMIC DNA]</scope>
    <source>
        <strain>DSM 14371 / CIP 107618 / JCM 11309 / KCTC 3954 / HTE831</strain>
    </source>
</reference>
<gene>
    <name evidence="1" type="primary">rplR</name>
    <name type="ordered locus">OB0135</name>
</gene>
<accession>Q8ETW7</accession>
<sequence length="119" mass="13058">MITKPDKNVIRKKRHNRVRRTLSGTAERPRLNVYRSNKNIYAQLIDDNAGVTVASASTADKELAIGGGNVESAKQVGAAIAKRAIDKGYKSIVFDRGGYLYHGRIKALAEAAREEGLEF</sequence>
<proteinExistence type="inferred from homology"/>
<evidence type="ECO:0000255" key="1">
    <source>
        <dbReference type="HAMAP-Rule" id="MF_01337"/>
    </source>
</evidence>
<evidence type="ECO:0000305" key="2"/>
<feature type="chain" id="PRO_0000131311" description="Large ribosomal subunit protein uL18">
    <location>
        <begin position="1"/>
        <end position="119"/>
    </location>
</feature>
<name>RL18_OCEIH</name>